<reference key="1">
    <citation type="journal article" date="2006" name="Appl. Environ. Microbiol.">
        <title>Complete genome sequence of the marine, chemolithoautotrophic, ammonia-oxidizing bacterium Nitrosococcus oceani ATCC 19707.</title>
        <authorList>
            <person name="Klotz M.G."/>
            <person name="Arp D.J."/>
            <person name="Chain P.S.G."/>
            <person name="El-Sheikh A.F."/>
            <person name="Hauser L.J."/>
            <person name="Hommes N.G."/>
            <person name="Larimer F.W."/>
            <person name="Malfatti S.A."/>
            <person name="Norton J.M."/>
            <person name="Poret-Peterson A.T."/>
            <person name="Vergez L.M."/>
            <person name="Ward B.B."/>
        </authorList>
    </citation>
    <scope>NUCLEOTIDE SEQUENCE [LARGE SCALE GENOMIC DNA]</scope>
    <source>
        <strain>ATCC 19707 / BCRC 17464 / JCM 30415 / NCIMB 11848 / C-107</strain>
    </source>
</reference>
<sequence length="188" mass="21109">MSIKSDKWIRYMAQAHGIIEPFEPRQIREANNARIISYGTSSYGYDIRCSNEFKIFTNINSAVVDPKNFDASSFVDVQSDVCIIPPNSFALARTVEYFRIPRSVLTICLGKSTYARCGIIVNITPLEPEWEGHVTLEFSNTTPLPAKVYANEGVAQVVFFESDELCETSYRDRSGKYQGQTGVTLPKA</sequence>
<evidence type="ECO:0000255" key="1">
    <source>
        <dbReference type="HAMAP-Rule" id="MF_00146"/>
    </source>
</evidence>
<dbReference type="EC" id="3.5.4.13" evidence="1"/>
<dbReference type="EMBL" id="CP000127">
    <property type="protein sequence ID" value="ABA57682.1"/>
    <property type="molecule type" value="Genomic_DNA"/>
</dbReference>
<dbReference type="RefSeq" id="WP_002809870.1">
    <property type="nucleotide sequence ID" value="NC_007484.1"/>
</dbReference>
<dbReference type="SMR" id="Q3JBW4"/>
<dbReference type="FunCoup" id="Q3JBW4">
    <property type="interactions" value="226"/>
</dbReference>
<dbReference type="STRING" id="323261.Noc_1180"/>
<dbReference type="KEGG" id="noc:Noc_1180"/>
<dbReference type="eggNOG" id="COG0717">
    <property type="taxonomic scope" value="Bacteria"/>
</dbReference>
<dbReference type="HOGENOM" id="CLU_087476_4_0_6"/>
<dbReference type="InParanoid" id="Q3JBW4"/>
<dbReference type="UniPathway" id="UPA00610">
    <property type="reaction ID" value="UER00665"/>
</dbReference>
<dbReference type="Proteomes" id="UP000006838">
    <property type="component" value="Chromosome"/>
</dbReference>
<dbReference type="GO" id="GO:0008829">
    <property type="term" value="F:dCTP deaminase activity"/>
    <property type="evidence" value="ECO:0007669"/>
    <property type="project" value="UniProtKB-UniRule"/>
</dbReference>
<dbReference type="GO" id="GO:0000166">
    <property type="term" value="F:nucleotide binding"/>
    <property type="evidence" value="ECO:0007669"/>
    <property type="project" value="UniProtKB-KW"/>
</dbReference>
<dbReference type="GO" id="GO:0006226">
    <property type="term" value="P:dUMP biosynthetic process"/>
    <property type="evidence" value="ECO:0007669"/>
    <property type="project" value="UniProtKB-UniPathway"/>
</dbReference>
<dbReference type="GO" id="GO:0006229">
    <property type="term" value="P:dUTP biosynthetic process"/>
    <property type="evidence" value="ECO:0007669"/>
    <property type="project" value="UniProtKB-UniRule"/>
</dbReference>
<dbReference type="GO" id="GO:0015949">
    <property type="term" value="P:nucleobase-containing small molecule interconversion"/>
    <property type="evidence" value="ECO:0007669"/>
    <property type="project" value="TreeGrafter"/>
</dbReference>
<dbReference type="CDD" id="cd07557">
    <property type="entry name" value="trimeric_dUTPase"/>
    <property type="match status" value="1"/>
</dbReference>
<dbReference type="FunFam" id="2.70.40.10:FF:000001">
    <property type="entry name" value="dCTP deaminase"/>
    <property type="match status" value="1"/>
</dbReference>
<dbReference type="Gene3D" id="2.70.40.10">
    <property type="match status" value="1"/>
</dbReference>
<dbReference type="HAMAP" id="MF_00146">
    <property type="entry name" value="dCTP_deaminase"/>
    <property type="match status" value="1"/>
</dbReference>
<dbReference type="InterPro" id="IPR011962">
    <property type="entry name" value="dCTP_deaminase"/>
</dbReference>
<dbReference type="InterPro" id="IPR036157">
    <property type="entry name" value="dUTPase-like_sf"/>
</dbReference>
<dbReference type="InterPro" id="IPR033704">
    <property type="entry name" value="dUTPase_trimeric"/>
</dbReference>
<dbReference type="NCBIfam" id="TIGR02274">
    <property type="entry name" value="dCTP_deam"/>
    <property type="match status" value="1"/>
</dbReference>
<dbReference type="PANTHER" id="PTHR42680">
    <property type="entry name" value="DCTP DEAMINASE"/>
    <property type="match status" value="1"/>
</dbReference>
<dbReference type="PANTHER" id="PTHR42680:SF3">
    <property type="entry name" value="DCTP DEAMINASE"/>
    <property type="match status" value="1"/>
</dbReference>
<dbReference type="Pfam" id="PF22769">
    <property type="entry name" value="DCD"/>
    <property type="match status" value="1"/>
</dbReference>
<dbReference type="SUPFAM" id="SSF51283">
    <property type="entry name" value="dUTPase-like"/>
    <property type="match status" value="1"/>
</dbReference>
<keyword id="KW-0378">Hydrolase</keyword>
<keyword id="KW-0546">Nucleotide metabolism</keyword>
<keyword id="KW-0547">Nucleotide-binding</keyword>
<keyword id="KW-1185">Reference proteome</keyword>
<proteinExistence type="inferred from homology"/>
<name>DCD_NITOC</name>
<gene>
    <name evidence="1" type="primary">dcd</name>
    <name type="ordered locus">Noc_1180</name>
</gene>
<protein>
    <recommendedName>
        <fullName evidence="1">dCTP deaminase</fullName>
        <ecNumber evidence="1">3.5.4.13</ecNumber>
    </recommendedName>
    <alternativeName>
        <fullName evidence="1">Deoxycytidine triphosphate deaminase</fullName>
    </alternativeName>
</protein>
<organism>
    <name type="scientific">Nitrosococcus oceani (strain ATCC 19707 / BCRC 17464 / JCM 30415 / NCIMB 11848 / C-107)</name>
    <dbReference type="NCBI Taxonomy" id="323261"/>
    <lineage>
        <taxon>Bacteria</taxon>
        <taxon>Pseudomonadati</taxon>
        <taxon>Pseudomonadota</taxon>
        <taxon>Gammaproteobacteria</taxon>
        <taxon>Chromatiales</taxon>
        <taxon>Chromatiaceae</taxon>
        <taxon>Nitrosococcus</taxon>
    </lineage>
</organism>
<accession>Q3JBW4</accession>
<comment type="function">
    <text evidence="1">Catalyzes the deamination of dCTP to dUTP.</text>
</comment>
<comment type="catalytic activity">
    <reaction evidence="1">
        <text>dCTP + H2O + H(+) = dUTP + NH4(+)</text>
        <dbReference type="Rhea" id="RHEA:22680"/>
        <dbReference type="ChEBI" id="CHEBI:15377"/>
        <dbReference type="ChEBI" id="CHEBI:15378"/>
        <dbReference type="ChEBI" id="CHEBI:28938"/>
        <dbReference type="ChEBI" id="CHEBI:61481"/>
        <dbReference type="ChEBI" id="CHEBI:61555"/>
        <dbReference type="EC" id="3.5.4.13"/>
    </reaction>
</comment>
<comment type="pathway">
    <text evidence="1">Pyrimidine metabolism; dUMP biosynthesis; dUMP from dCTP (dUTP route): step 1/2.</text>
</comment>
<comment type="subunit">
    <text evidence="1">Homotrimer.</text>
</comment>
<comment type="similarity">
    <text evidence="1">Belongs to the dCTP deaminase family.</text>
</comment>
<feature type="chain" id="PRO_1000009772" description="dCTP deaminase">
    <location>
        <begin position="1"/>
        <end position="188"/>
    </location>
</feature>
<feature type="active site" description="Proton donor/acceptor" evidence="1">
    <location>
        <position position="137"/>
    </location>
</feature>
<feature type="binding site" evidence="1">
    <location>
        <begin position="111"/>
        <end position="116"/>
    </location>
    <ligand>
        <name>dCTP</name>
        <dbReference type="ChEBI" id="CHEBI:61481"/>
    </ligand>
</feature>
<feature type="binding site" evidence="1">
    <location>
        <begin position="135"/>
        <end position="137"/>
    </location>
    <ligand>
        <name>dCTP</name>
        <dbReference type="ChEBI" id="CHEBI:61481"/>
    </ligand>
</feature>
<feature type="binding site" evidence="1">
    <location>
        <position position="156"/>
    </location>
    <ligand>
        <name>dCTP</name>
        <dbReference type="ChEBI" id="CHEBI:61481"/>
    </ligand>
</feature>
<feature type="binding site" evidence="1">
    <location>
        <position position="170"/>
    </location>
    <ligand>
        <name>dCTP</name>
        <dbReference type="ChEBI" id="CHEBI:61481"/>
    </ligand>
</feature>
<feature type="binding site" evidence="1">
    <location>
        <position position="180"/>
    </location>
    <ligand>
        <name>dCTP</name>
        <dbReference type="ChEBI" id="CHEBI:61481"/>
    </ligand>
</feature>